<evidence type="ECO:0000305" key="1"/>
<comment type="similarity">
    <text evidence="1">Belongs to the herpesviridae UL95 family.</text>
</comment>
<organism>
    <name type="scientific">Human herpesvirus 6A (strain Uganda-1102)</name>
    <name type="common">HHV-6 variant A</name>
    <name type="synonym">Human B lymphotropic virus</name>
    <dbReference type="NCBI Taxonomy" id="10370"/>
    <lineage>
        <taxon>Viruses</taxon>
        <taxon>Duplodnaviria</taxon>
        <taxon>Heunggongvirae</taxon>
        <taxon>Peploviricota</taxon>
        <taxon>Herviviricetes</taxon>
        <taxon>Herpesvirales</taxon>
        <taxon>Orthoherpesviridae</taxon>
        <taxon>Betaherpesvirinae</taxon>
        <taxon>Roseolovirus</taxon>
        <taxon>Roseolovirus humanbeta6a</taxon>
        <taxon>Human betaherpesvirus 6A</taxon>
    </lineage>
</organism>
<reference key="1">
    <citation type="journal article" date="1990" name="J. Virol.">
        <title>Human herpesvirus 6 is closely related to human cytomegalovirus.</title>
        <authorList>
            <person name="Lawrence G.L."/>
            <person name="Chee M."/>
            <person name="Craxton M.A."/>
            <person name="Gompels U.A."/>
            <person name="Honess R.W."/>
            <person name="Barrell B.G."/>
        </authorList>
    </citation>
    <scope>NUCLEOTIDE SEQUENCE [GENOMIC DNA]</scope>
</reference>
<reference key="2">
    <citation type="journal article" date="1995" name="Virology">
        <title>The DNA sequence of human herpesvirus-6: structure, coding content, and genome evolution.</title>
        <authorList>
            <person name="Gompels U.A."/>
            <person name="Nicholas J."/>
            <person name="Lawrence G.L."/>
            <person name="Jones M."/>
            <person name="Thomson B.J."/>
            <person name="Martin M.E.D."/>
            <person name="Efstathiou S."/>
            <person name="Craxton M.A."/>
            <person name="Macaulay H.A."/>
        </authorList>
    </citation>
    <scope>NUCLEOTIDE SEQUENCE [LARGE SCALE GENOMIC DNA]</scope>
</reference>
<gene>
    <name type="primary">U67</name>
    <name type="synonym">13R</name>
</gene>
<proteinExistence type="inferred from homology"/>
<accession>P24444</accession>
<keyword id="KW-1185">Reference proteome</keyword>
<sequence>MWVMSQVRSMEPDLTLAAVYQAAANLTEQDKEIFAEAVKTAFSVCSSAAPSARLRMIETPTQNFMFVTSVIPSGVTSGEKKTKLNIDAALDNLALSFANKKSKKMARTYLLQNVLRTQDQQVAISGKYILYTKKHIETSLMIDKTKLVKKILEYAETPNLLGYTDVRDLECLLWLVFCGPKSFCQSDSCFGYSKTGYNAAFPNLLPPYLYECGQNNGLFFGIVQAYVFSWYSDFDFSALEISERARRRIRSLLYDLKQKFAEQEVSVLSVASQMCIFCALYKQNKLSLEYVSGDLKTSVFSPIIIKDCLCAQTTISTTQMLPGTKSSAIFPVYDLRKLLGALVISEGSVKFDI</sequence>
<feature type="chain" id="PRO_0000116244" description="Protein U67">
    <location>
        <begin position="1"/>
        <end position="353"/>
    </location>
</feature>
<name>UL95_HHV6U</name>
<protein>
    <recommendedName>
        <fullName>Protein U67</fullName>
    </recommendedName>
</protein>
<organismHost>
    <name type="scientific">Homo sapiens</name>
    <name type="common">Human</name>
    <dbReference type="NCBI Taxonomy" id="9606"/>
</organismHost>
<dbReference type="EMBL" id="M68963">
    <property type="protein sequence ID" value="AAA65575.1"/>
    <property type="molecule type" value="Genomic_DNA"/>
</dbReference>
<dbReference type="EMBL" id="X83413">
    <property type="protein sequence ID" value="CAA58359.1"/>
    <property type="molecule type" value="Genomic_DNA"/>
</dbReference>
<dbReference type="PIR" id="C36769">
    <property type="entry name" value="C36769"/>
</dbReference>
<dbReference type="RefSeq" id="NP_042960.1">
    <property type="nucleotide sequence ID" value="NC_001664.2"/>
</dbReference>
<dbReference type="SMR" id="P24444"/>
<dbReference type="DNASU" id="1487948"/>
<dbReference type="GeneID" id="1487948"/>
<dbReference type="KEGG" id="vg:1487948"/>
<dbReference type="Proteomes" id="UP000009295">
    <property type="component" value="Segment"/>
</dbReference>
<dbReference type="InterPro" id="IPR004280">
    <property type="entry name" value="Herpes_UL95"/>
</dbReference>
<dbReference type="Pfam" id="PF03038">
    <property type="entry name" value="Herpes_UL95"/>
    <property type="match status" value="1"/>
</dbReference>